<accession>Q8N9B5</accession>
<accession>A1L4P5</accession>
<accession>B5MDS2</accession>
<accession>B5MDT0</accession>
<name>JMY_HUMAN</name>
<proteinExistence type="evidence at protein level"/>
<reference key="1">
    <citation type="journal article" date="2004" name="Nature">
        <title>The DNA sequence and comparative analysis of human chromosome 5.</title>
        <authorList>
            <person name="Schmutz J."/>
            <person name="Martin J."/>
            <person name="Terry A."/>
            <person name="Couronne O."/>
            <person name="Grimwood J."/>
            <person name="Lowry S."/>
            <person name="Gordon L.A."/>
            <person name="Scott D."/>
            <person name="Xie G."/>
            <person name="Huang W."/>
            <person name="Hellsten U."/>
            <person name="Tran-Gyamfi M."/>
            <person name="She X."/>
            <person name="Prabhakar S."/>
            <person name="Aerts A."/>
            <person name="Altherr M."/>
            <person name="Bajorek E."/>
            <person name="Black S."/>
            <person name="Branscomb E."/>
            <person name="Caoile C."/>
            <person name="Challacombe J.F."/>
            <person name="Chan Y.M."/>
            <person name="Denys M."/>
            <person name="Detter J.C."/>
            <person name="Escobar J."/>
            <person name="Flowers D."/>
            <person name="Fotopulos D."/>
            <person name="Glavina T."/>
            <person name="Gomez M."/>
            <person name="Gonzales E."/>
            <person name="Goodstein D."/>
            <person name="Grigoriev I."/>
            <person name="Groza M."/>
            <person name="Hammon N."/>
            <person name="Hawkins T."/>
            <person name="Haydu L."/>
            <person name="Israni S."/>
            <person name="Jett J."/>
            <person name="Kadner K."/>
            <person name="Kimball H."/>
            <person name="Kobayashi A."/>
            <person name="Lopez F."/>
            <person name="Lou Y."/>
            <person name="Martinez D."/>
            <person name="Medina C."/>
            <person name="Morgan J."/>
            <person name="Nandkeshwar R."/>
            <person name="Noonan J.P."/>
            <person name="Pitluck S."/>
            <person name="Pollard M."/>
            <person name="Predki P."/>
            <person name="Priest J."/>
            <person name="Ramirez L."/>
            <person name="Retterer J."/>
            <person name="Rodriguez A."/>
            <person name="Rogers S."/>
            <person name="Salamov A."/>
            <person name="Salazar A."/>
            <person name="Thayer N."/>
            <person name="Tice H."/>
            <person name="Tsai M."/>
            <person name="Ustaszewska A."/>
            <person name="Vo N."/>
            <person name="Wheeler J."/>
            <person name="Wu K."/>
            <person name="Yang J."/>
            <person name="Dickson M."/>
            <person name="Cheng J.-F."/>
            <person name="Eichler E.E."/>
            <person name="Olsen A."/>
            <person name="Pennacchio L.A."/>
            <person name="Rokhsar D.S."/>
            <person name="Richardson P."/>
            <person name="Lucas S.M."/>
            <person name="Myers R.M."/>
            <person name="Rubin E.M."/>
        </authorList>
    </citation>
    <scope>NUCLEOTIDE SEQUENCE [LARGE SCALE GENOMIC DNA]</scope>
</reference>
<reference key="2">
    <citation type="submission" date="2005-07" db="EMBL/GenBank/DDBJ databases">
        <authorList>
            <person name="Mural R.J."/>
            <person name="Istrail S."/>
            <person name="Sutton G.G."/>
            <person name="Florea L."/>
            <person name="Halpern A.L."/>
            <person name="Mobarry C.M."/>
            <person name="Lippert R."/>
            <person name="Walenz B."/>
            <person name="Shatkay H."/>
            <person name="Dew I."/>
            <person name="Miller J.R."/>
            <person name="Flanigan M.J."/>
            <person name="Edwards N.J."/>
            <person name="Bolanos R."/>
            <person name="Fasulo D."/>
            <person name="Halldorsson B.V."/>
            <person name="Hannenhalli S."/>
            <person name="Turner R."/>
            <person name="Yooseph S."/>
            <person name="Lu F."/>
            <person name="Nusskern D.R."/>
            <person name="Shue B.C."/>
            <person name="Zheng X.H."/>
            <person name="Zhong F."/>
            <person name="Delcher A.L."/>
            <person name="Huson D.H."/>
            <person name="Kravitz S.A."/>
            <person name="Mouchard L."/>
            <person name="Reinert K."/>
            <person name="Remington K.A."/>
            <person name="Clark A.G."/>
            <person name="Waterman M.S."/>
            <person name="Eichler E.E."/>
            <person name="Adams M.D."/>
            <person name="Hunkapiller M.W."/>
            <person name="Myers E.W."/>
            <person name="Venter J.C."/>
        </authorList>
    </citation>
    <scope>NUCLEOTIDE SEQUENCE [LARGE SCALE GENOMIC DNA]</scope>
    <scope>VARIANT LEU-364</scope>
</reference>
<reference key="3">
    <citation type="journal article" date="2004" name="Genome Res.">
        <title>The status, quality, and expansion of the NIH full-length cDNA project: the Mammalian Gene Collection (MGC).</title>
        <authorList>
            <consortium name="The MGC Project Team"/>
        </authorList>
    </citation>
    <scope>NUCLEOTIDE SEQUENCE [LARGE SCALE MRNA] OF 345-988 (ISOFORM 2)</scope>
    <source>
        <tissue>Brain</tissue>
    </source>
</reference>
<reference key="4">
    <citation type="journal article" date="2004" name="Nat. Genet.">
        <title>Complete sequencing and characterization of 21,243 full-length human cDNAs.</title>
        <authorList>
            <person name="Ota T."/>
            <person name="Suzuki Y."/>
            <person name="Nishikawa T."/>
            <person name="Otsuki T."/>
            <person name="Sugiyama T."/>
            <person name="Irie R."/>
            <person name="Wakamatsu A."/>
            <person name="Hayashi K."/>
            <person name="Sato H."/>
            <person name="Nagai K."/>
            <person name="Kimura K."/>
            <person name="Makita H."/>
            <person name="Sekine M."/>
            <person name="Obayashi M."/>
            <person name="Nishi T."/>
            <person name="Shibahara T."/>
            <person name="Tanaka T."/>
            <person name="Ishii S."/>
            <person name="Yamamoto J."/>
            <person name="Saito K."/>
            <person name="Kawai Y."/>
            <person name="Isono Y."/>
            <person name="Nakamura Y."/>
            <person name="Nagahari K."/>
            <person name="Murakami K."/>
            <person name="Yasuda T."/>
            <person name="Iwayanagi T."/>
            <person name="Wagatsuma M."/>
            <person name="Shiratori A."/>
            <person name="Sudo H."/>
            <person name="Hosoiri T."/>
            <person name="Kaku Y."/>
            <person name="Kodaira H."/>
            <person name="Kondo H."/>
            <person name="Sugawara M."/>
            <person name="Takahashi M."/>
            <person name="Kanda K."/>
            <person name="Yokoi T."/>
            <person name="Furuya T."/>
            <person name="Kikkawa E."/>
            <person name="Omura Y."/>
            <person name="Abe K."/>
            <person name="Kamihara K."/>
            <person name="Katsuta N."/>
            <person name="Sato K."/>
            <person name="Tanikawa M."/>
            <person name="Yamazaki M."/>
            <person name="Ninomiya K."/>
            <person name="Ishibashi T."/>
            <person name="Yamashita H."/>
            <person name="Murakawa K."/>
            <person name="Fujimori K."/>
            <person name="Tanai H."/>
            <person name="Kimata M."/>
            <person name="Watanabe M."/>
            <person name="Hiraoka S."/>
            <person name="Chiba Y."/>
            <person name="Ishida S."/>
            <person name="Ono Y."/>
            <person name="Takiguchi S."/>
            <person name="Watanabe S."/>
            <person name="Yosida M."/>
            <person name="Hotuta T."/>
            <person name="Kusano J."/>
            <person name="Kanehori K."/>
            <person name="Takahashi-Fujii A."/>
            <person name="Hara H."/>
            <person name="Tanase T.-O."/>
            <person name="Nomura Y."/>
            <person name="Togiya S."/>
            <person name="Komai F."/>
            <person name="Hara R."/>
            <person name="Takeuchi K."/>
            <person name="Arita M."/>
            <person name="Imose N."/>
            <person name="Musashino K."/>
            <person name="Yuuki H."/>
            <person name="Oshima A."/>
            <person name="Sasaki N."/>
            <person name="Aotsuka S."/>
            <person name="Yoshikawa Y."/>
            <person name="Matsunawa H."/>
            <person name="Ichihara T."/>
            <person name="Shiohata N."/>
            <person name="Sano S."/>
            <person name="Moriya S."/>
            <person name="Momiyama H."/>
            <person name="Satoh N."/>
            <person name="Takami S."/>
            <person name="Terashima Y."/>
            <person name="Suzuki O."/>
            <person name="Nakagawa S."/>
            <person name="Senoh A."/>
            <person name="Mizoguchi H."/>
            <person name="Goto Y."/>
            <person name="Shimizu F."/>
            <person name="Wakebe H."/>
            <person name="Hishigaki H."/>
            <person name="Watanabe T."/>
            <person name="Sugiyama A."/>
            <person name="Takemoto M."/>
            <person name="Kawakami B."/>
            <person name="Yamazaki M."/>
            <person name="Watanabe K."/>
            <person name="Kumagai A."/>
            <person name="Itakura S."/>
            <person name="Fukuzumi Y."/>
            <person name="Fujimori Y."/>
            <person name="Komiyama M."/>
            <person name="Tashiro H."/>
            <person name="Tanigami A."/>
            <person name="Fujiwara T."/>
            <person name="Ono T."/>
            <person name="Yamada K."/>
            <person name="Fujii Y."/>
            <person name="Ozaki K."/>
            <person name="Hirao M."/>
            <person name="Ohmori Y."/>
            <person name="Kawabata A."/>
            <person name="Hikiji T."/>
            <person name="Kobatake N."/>
            <person name="Inagaki H."/>
            <person name="Ikema Y."/>
            <person name="Okamoto S."/>
            <person name="Okitani R."/>
            <person name="Kawakami T."/>
            <person name="Noguchi S."/>
            <person name="Itoh T."/>
            <person name="Shigeta K."/>
            <person name="Senba T."/>
            <person name="Matsumura K."/>
            <person name="Nakajima Y."/>
            <person name="Mizuno T."/>
            <person name="Morinaga M."/>
            <person name="Sasaki M."/>
            <person name="Togashi T."/>
            <person name="Oyama M."/>
            <person name="Hata H."/>
            <person name="Watanabe M."/>
            <person name="Komatsu T."/>
            <person name="Mizushima-Sugano J."/>
            <person name="Satoh T."/>
            <person name="Shirai Y."/>
            <person name="Takahashi Y."/>
            <person name="Nakagawa K."/>
            <person name="Okumura K."/>
            <person name="Nagase T."/>
            <person name="Nomura N."/>
            <person name="Kikuchi H."/>
            <person name="Masuho Y."/>
            <person name="Yamashita R."/>
            <person name="Nakai K."/>
            <person name="Yada T."/>
            <person name="Nakamura Y."/>
            <person name="Ohara O."/>
            <person name="Isogai T."/>
            <person name="Sugano S."/>
        </authorList>
    </citation>
    <scope>NUCLEOTIDE SEQUENCE [LARGE SCALE MRNA] OF 351-988 (ISOFORM 1)</scope>
    <scope>VARIANT LEU-364</scope>
    <source>
        <tissue>Substantia nigra</tissue>
    </source>
</reference>
<reference key="5">
    <citation type="journal article" date="2005" name="Cell Death Differ.">
        <title>Novel link between E2F and p53: proapoptotic cofactors of p53 are transcriptionally upregulated by E2F.</title>
        <authorList>
            <person name="Hershko T."/>
            <person name="Chaussepied M."/>
            <person name="Oren M."/>
            <person name="Ginsberg D."/>
        </authorList>
    </citation>
    <scope>INDUCTION</scope>
</reference>
<reference key="6">
    <citation type="journal article" date="2008" name="Proc. Natl. Acad. Sci. U.S.A.">
        <title>A quantitative atlas of mitotic phosphorylation.</title>
        <authorList>
            <person name="Dephoure N."/>
            <person name="Zhou C."/>
            <person name="Villen J."/>
            <person name="Beausoleil S.A."/>
            <person name="Bakalarski C.E."/>
            <person name="Elledge S.J."/>
            <person name="Gygi S.P."/>
        </authorList>
    </citation>
    <scope>PHOSPHORYLATION [LARGE SCALE ANALYSIS] AT SER-974</scope>
    <scope>IDENTIFICATION BY MASS SPECTROMETRY [LARGE SCALE ANALYSIS]</scope>
    <source>
        <tissue>Cervix carcinoma</tissue>
    </source>
</reference>
<reference key="7">
    <citation type="journal article" date="2009" name="Anal. Chem.">
        <title>Lys-N and trypsin cover complementary parts of the phosphoproteome in a refined SCX-based approach.</title>
        <authorList>
            <person name="Gauci S."/>
            <person name="Helbig A.O."/>
            <person name="Slijper M."/>
            <person name="Krijgsveld J."/>
            <person name="Heck A.J."/>
            <person name="Mohammed S."/>
        </authorList>
    </citation>
    <scope>IDENTIFICATION BY MASS SPECTROMETRY [LARGE SCALE ANALYSIS]</scope>
</reference>
<reference key="8">
    <citation type="journal article" date="2009" name="Nat. Cell Biol.">
        <title>p53-cofactor JMY is a multifunctional actin nucleation factor.</title>
        <authorList>
            <person name="Zuchero J.B."/>
            <person name="Coutts A.S."/>
            <person name="Quinlan M.E."/>
            <person name="Thangue N.B."/>
            <person name="Mullins R.D."/>
        </authorList>
    </citation>
    <scope>SUBCELLULAR LOCATION</scope>
</reference>
<reference key="9">
    <citation type="journal article" date="2011" name="BMC Syst. Biol.">
        <title>Initial characterization of the human central proteome.</title>
        <authorList>
            <person name="Burkard T.R."/>
            <person name="Planyavsky M."/>
            <person name="Kaupe I."/>
            <person name="Breitwieser F.P."/>
            <person name="Buerckstuemmer T."/>
            <person name="Bennett K.L."/>
            <person name="Superti-Furga G."/>
            <person name="Colinge J."/>
        </authorList>
    </citation>
    <scope>IDENTIFICATION BY MASS SPECTROMETRY [LARGE SCALE ANALYSIS]</scope>
</reference>
<reference key="10">
    <citation type="journal article" date="2013" name="J. Proteome Res.">
        <title>Toward a comprehensive characterization of a human cancer cell phosphoproteome.</title>
        <authorList>
            <person name="Zhou H."/>
            <person name="Di Palma S."/>
            <person name="Preisinger C."/>
            <person name="Peng M."/>
            <person name="Polat A.N."/>
            <person name="Heck A.J."/>
            <person name="Mohammed S."/>
        </authorList>
    </citation>
    <scope>PHOSPHORYLATION [LARGE SCALE ANALYSIS] AT SER-115; SER-121 AND SER-713</scope>
    <scope>IDENTIFICATION BY MASS SPECTROMETRY [LARGE SCALE ANALYSIS]</scope>
    <source>
        <tissue>Cervix carcinoma</tissue>
        <tissue>Erythroleukemia</tissue>
    </source>
</reference>
<reference key="11">
    <citation type="journal article" date="2019" name="J. Cell Biol.">
        <title>LC3 and STRAP regulate actin filament assembly by JMY during autophagosome formation.</title>
        <authorList>
            <person name="Hu X."/>
            <person name="Mullins R.D."/>
        </authorList>
    </citation>
    <scope>FUNCTION</scope>
    <scope>INTERACTION WITH TTC5 AND MAP1LC3B</scope>
    <scope>SUBCELLULAR LOCATION</scope>
    <scope>DOMAIN</scope>
</reference>
<gene>
    <name type="primary">JMY</name>
</gene>
<sequence length="988" mass="111445">MSFALEETLESDWVAVRPHVFDEREKHKFVFIVAWNEIEGKFAITCHNRTAQRQRSGSREQAGARGGAEAGGAASDGSRGPGSPAGRGRPEATASATLVRSPGPRRSSAWAEGGSPRSTRSLLGDPRLRSPGSKGAESRLRSPVRAKPIPGQKTSEADDAAGAAAAAARPAPREAQVSSVRIVSASGTVSEEIEVLEMVKEDEAPLALSDAEQPPPATELESPAEECSWAGLFSFQDLRAVHQQLCSVNSQLEPCLPVFPEEPSGMWTVLFGGAPEMTEQEIDTLCYQLQVYLGHGLDTCGWKILSQVLFTETDDPEEYYESLSELRQKGYEEVLQRARKRIQELLDKHKNTESMVELLDLYQMEDEAYSSLAEATTELYQYLLQPFRDMRELAMLRRQQIKISMENDYLGPRRIESLQKEDADWQRKAHMAVLSIQDLTVKYFEITAKAQKAVYDRMRADQKKFGKASWAAAAERMEKLQYAVSKETLQMMRAKEICLEQRKHALKEEMQSLRGGTEAIARLDQLEADYYDLQLQLYEVQFEILKCEELLLTAQLESIKRLISEKRDEVVYYDTYESMEAMLEKEEMAASAYLQREELQKLQQKARQLEARRGRVSAKKSYLRNKKEICIAKHNEKIQQRTRIEDEYRTHHTVQLKREKLHDEEERKSAWVSQERQRTLDRLRTFKQRYPGQVILKSTRLRLAHARRKGAASPVLQEDHCDSLPSVLQVEEKTEEVGEGRVKRGPSQTTEPQSLVQLEDTSLTQLEATSLPLSGVTSELPPTISLPLLNNNLEPCSVTINPLPSPLPPTPPPPPPPPPPPPPPPLPVAKDSGPETLEKDLPRKEGNEKRIPKSASAPSAHLFDSSQLVSARKKLRKTAEGLQRRRVSSPMDEVLASLKRGSFHLKKVEQRTLPPFPDEDDSNNILAQIRKGVKLKKVQKDVLRESFTLLPDTDPLTRSIHEALRRIKEASPESEDEEEALPCTDWEN</sequence>
<organism>
    <name type="scientific">Homo sapiens</name>
    <name type="common">Human</name>
    <dbReference type="NCBI Taxonomy" id="9606"/>
    <lineage>
        <taxon>Eukaryota</taxon>
        <taxon>Metazoa</taxon>
        <taxon>Chordata</taxon>
        <taxon>Craniata</taxon>
        <taxon>Vertebrata</taxon>
        <taxon>Euteleostomi</taxon>
        <taxon>Mammalia</taxon>
        <taxon>Eutheria</taxon>
        <taxon>Euarchontoglires</taxon>
        <taxon>Primates</taxon>
        <taxon>Haplorrhini</taxon>
        <taxon>Catarrhini</taxon>
        <taxon>Hominidae</taxon>
        <taxon>Homo</taxon>
    </lineage>
</organism>
<feature type="chain" id="PRO_0000324611" description="Junction-mediating and -regulatory protein">
    <location>
        <begin position="1"/>
        <end position="988"/>
    </location>
</feature>
<feature type="domain" description="WH2" evidence="4">
    <location>
        <begin position="921"/>
        <end position="938"/>
    </location>
</feature>
<feature type="region of interest" description="Interaction with p300/EP300" evidence="1">
    <location>
        <begin position="1"/>
        <end position="126"/>
    </location>
</feature>
<feature type="region of interest" description="Disordered" evidence="5">
    <location>
        <begin position="51"/>
        <end position="178"/>
    </location>
</feature>
<feature type="region of interest" description="Interaction with p300/EP300" evidence="1">
    <location>
        <begin position="478"/>
        <end position="567"/>
    </location>
</feature>
<feature type="region of interest" description="Disordered" evidence="5">
    <location>
        <begin position="731"/>
        <end position="755"/>
    </location>
</feature>
<feature type="region of interest" description="Disordered" evidence="5">
    <location>
        <begin position="800"/>
        <end position="865"/>
    </location>
</feature>
<feature type="region of interest" description="Disordered" evidence="5">
    <location>
        <begin position="967"/>
        <end position="988"/>
    </location>
</feature>
<feature type="coiled-coil region" evidence="3">
    <location>
        <begin position="324"/>
        <end position="360"/>
    </location>
</feature>
<feature type="coiled-coil region" evidence="3">
    <location>
        <begin position="489"/>
        <end position="541"/>
    </location>
</feature>
<feature type="coiled-coil region" evidence="3">
    <location>
        <begin position="590"/>
        <end position="621"/>
    </location>
</feature>
<feature type="compositionally biased region" description="Low complexity" evidence="5">
    <location>
        <begin position="160"/>
        <end position="175"/>
    </location>
</feature>
<feature type="compositionally biased region" description="Basic and acidic residues" evidence="5">
    <location>
        <begin position="731"/>
        <end position="742"/>
    </location>
</feature>
<feature type="compositionally biased region" description="Polar residues" evidence="5">
    <location>
        <begin position="746"/>
        <end position="755"/>
    </location>
</feature>
<feature type="compositionally biased region" description="Pro residues" evidence="5">
    <location>
        <begin position="803"/>
        <end position="827"/>
    </location>
</feature>
<feature type="compositionally biased region" description="Basic and acidic residues" evidence="5">
    <location>
        <begin position="832"/>
        <end position="851"/>
    </location>
</feature>
<feature type="compositionally biased region" description="Acidic residues" evidence="5">
    <location>
        <begin position="972"/>
        <end position="988"/>
    </location>
</feature>
<feature type="modified residue" description="Phosphoserine" evidence="14">
    <location>
        <position position="115"/>
    </location>
</feature>
<feature type="modified residue" description="Phosphoserine" evidence="14">
    <location>
        <position position="121"/>
    </location>
</feature>
<feature type="modified residue" description="Phosphoserine" evidence="14">
    <location>
        <position position="713"/>
    </location>
</feature>
<feature type="modified residue" description="Phosphoserine" evidence="2">
    <location>
        <position position="888"/>
    </location>
</feature>
<feature type="modified residue" description="Phosphoserine" evidence="13">
    <location>
        <position position="974"/>
    </location>
</feature>
<feature type="splice variant" id="VSP_032310" description="In isoform 2." evidence="11">
    <location>
        <begin position="814"/>
        <end position="825"/>
    </location>
</feature>
<feature type="sequence variant" id="VAR_039846" description="In dbSNP:rs13182512." evidence="6 10">
    <original>M</original>
    <variation>L</variation>
    <location>
        <position position="364"/>
    </location>
</feature>
<feature type="sequence variant" id="VAR_039847" description="In dbSNP:rs12109475.">
    <original>A</original>
    <variation>V</variation>
    <location>
        <position position="592"/>
    </location>
</feature>
<feature type="sequence variant" id="VAR_039848" description="In dbSNP:rs16876657.">
    <original>H</original>
    <variation>R</variation>
    <location>
        <position position="720"/>
    </location>
</feature>
<keyword id="KW-0009">Actin-binding</keyword>
<keyword id="KW-0025">Alternative splicing</keyword>
<keyword id="KW-0175">Coiled coil</keyword>
<keyword id="KW-0963">Cytoplasm</keyword>
<keyword id="KW-0968">Cytoplasmic vesicle</keyword>
<keyword id="KW-0206">Cytoskeleton</keyword>
<keyword id="KW-0227">DNA damage</keyword>
<keyword id="KW-0234">DNA repair</keyword>
<keyword id="KW-0449">Lipoprotein</keyword>
<keyword id="KW-0472">Membrane</keyword>
<keyword id="KW-0539">Nucleus</keyword>
<keyword id="KW-0597">Phosphoprotein</keyword>
<keyword id="KW-1267">Proteomics identification</keyword>
<keyword id="KW-1185">Reference proteome</keyword>
<keyword id="KW-0832">Ubl conjugation</keyword>
<comment type="function">
    <text evidence="2 9">Acts both as a nuclear p53/TP53-cofactor and a cytoplasmic regulator of actin dynamics depending on conditions (PubMed:30420355). In nucleus, acts as a cofactor that increases p53/TP53 response via its interaction with p300/EP300. Increases p53/TP53-dependent transcription and apoptosis, suggesting an important role in p53/TP53 stress response such as DNA damage. In cytoplasm, acts as a nucleation-promoting factor for both branched and unbranched actin filaments (PubMed:30420355). Activates the Arp2/3 complex to induce branched actin filament networks. Also catalyzes actin polymerization in the absence of Arp2/3, creating unbranched filaments (PubMed:30420355). Contributes to cell motility by controlling actin dynamics. May promote the rapid formation of a branched actin network by first nucleating new mother filaments and then activating Arp2/3 to branch off these filaments. Upon nutrient stress, directly recruited by MAP1LC3B to the phagophore membrane surfaces to promote actin assembly during autophagy (PubMed:30420355). The p53/TP53-cofactor and actin activator activities are regulated via its subcellular location (By similarity).</text>
</comment>
<comment type="subunit">
    <text evidence="2 9">Interacts with p300/EP300, the complex activates p53/TP53 transcriptional activity. Interacts with TTC5; the interaction facilitates the association between JMY and p300/EP300 (By similarity). Interacts with MAP1LC3B; the interaction results in the activation of JYM's nucleation activity in the cytoplasm (PubMed:30420355). Interacts with TTC5/STRAP; the interaction results in the inhibition of JYM's nucleation activity in the cytoplasm due to competition with MAP1LC3B binding (PubMed:30420355).</text>
</comment>
<comment type="interaction">
    <interactant intactId="EBI-866435">
        <id>Q8N9B5</id>
    </interactant>
    <interactant intactId="EBI-389668">
        <id>Q00987</id>
        <label>MDM2</label>
    </interactant>
    <organismsDiffer>false</organismsDiffer>
    <experiments>2</experiments>
</comment>
<comment type="interaction">
    <interactant intactId="EBI-10268138">
        <id>Q8N9B5-2</id>
    </interactant>
    <interactant intactId="EBI-10171416">
        <id>Q96JN2-2</id>
        <label>CCDC136</label>
    </interactant>
    <organismsDiffer>false</organismsDiffer>
    <experiments>3</experiments>
</comment>
<comment type="interaction">
    <interactant intactId="EBI-10268138">
        <id>Q8N9B5-2</id>
    </interactant>
    <interactant intactId="EBI-5916454">
        <id>A6NEM1</id>
        <label>GOLGA6L9</label>
    </interactant>
    <organismsDiffer>false</organismsDiffer>
    <experiments>3</experiments>
</comment>
<comment type="interaction">
    <interactant intactId="EBI-10268138">
        <id>Q8N9B5-2</id>
    </interactant>
    <interactant intactId="EBI-11522433">
        <id>Q5JR59-3</id>
        <label>MTUS2</label>
    </interactant>
    <organismsDiffer>false</organismsDiffer>
    <experiments>3</experiments>
</comment>
<comment type="interaction">
    <interactant intactId="EBI-10268138">
        <id>Q8N9B5-2</id>
    </interactant>
    <interactant intactId="EBI-473821">
        <id>Q5RL73</id>
        <label>RBM48</label>
    </interactant>
    <organismsDiffer>false</organismsDiffer>
    <experiments>3</experiments>
</comment>
<comment type="interaction">
    <interactant intactId="EBI-10268138">
        <id>Q8N9B5-2</id>
    </interactant>
    <interactant intactId="EBI-726876">
        <id>Q6NUQ1</id>
        <label>RINT1</label>
    </interactant>
    <organismsDiffer>false</organismsDiffer>
    <experiments>3</experiments>
</comment>
<comment type="subcellular location">
    <subcellularLocation>
        <location evidence="2">Nucleus</location>
    </subcellularLocation>
    <subcellularLocation>
        <location evidence="9">Cytoplasmic vesicle</location>
    </subcellularLocation>
    <subcellularLocation>
        <location evidence="8 9">Cytoplasm</location>
        <location evidence="8 9">Cytoskeleton</location>
    </subcellularLocation>
    <subcellularLocation>
        <location>Endomembrane system</location>
        <topology>Lipid-anchor</topology>
    </subcellularLocation>
    <subcellularLocation>
        <location evidence="9">Cytoplasmic vesicle</location>
        <location evidence="9">Autophagosome membrane</location>
    </subcellularLocation>
    <text evidence="1 9">Localizes to the nucleus in most cell types. Accumulates in nucleus under DNA damage conditions, increasing p53/TP53 transcription response and reducing its influence on cell motility (By similarity). In primary neutrophils, it colocalizes with actin filaments at the leading edge and is excluded from the nucleus. Localization correlates with motility, because it moves from the nucleus to the cytoplasmic compartment when cells are differentiated from nonmotile cells into highly motile neutrophil-like cells. Localizes to cytoplasmic vesicles which associate with actin filament and autophagosomal membranes upon starvation-induced autophagy (PubMed:30420355).</text>
</comment>
<comment type="alternative products">
    <event type="alternative splicing"/>
    <isoform>
        <id>Q8N9B5-1</id>
        <name>1</name>
        <sequence type="displayed"/>
    </isoform>
    <isoform>
        <id>Q8N9B5-2</id>
        <name>2</name>
        <sequence type="described" ref="VSP_032310"/>
    </isoform>
</comment>
<comment type="induction">
    <text evidence="7">By E2F.</text>
</comment>
<comment type="domain">
    <text evidence="9">The N-terminal region is involved in actin binding and actin nucleation activity.</text>
</comment>
<comment type="PTM">
    <text evidence="1">Ubiquitinated by MDM2, leading to its subsequent degradation by the proteasome. In case of DNA damage, the interaction with MDM2 is altered, preventing degradation and allowing interaction with p300/EP300 and its function in p53/TP53 stress response (By similarity).</text>
</comment>
<comment type="similarity">
    <text evidence="12">Belongs to the JMY family.</text>
</comment>
<comment type="sequence caution" evidence="12">
    <conflict type="erroneous initiation">
        <sequence resource="EMBL-CDS" id="AAI30625"/>
    </conflict>
</comment>
<comment type="sequence caution" evidence="12">
    <conflict type="erroneous initiation">
        <sequence resource="EMBL-CDS" id="BAC04495"/>
    </conflict>
</comment>
<comment type="sequence caution" evidence="12">
    <conflict type="erroneous gene model prediction">
        <sequence resource="EMBL-CDS" id="EAW95834"/>
    </conflict>
</comment>
<dbReference type="EMBL" id="AC016559">
    <property type="status" value="NOT_ANNOTATED_CDS"/>
    <property type="molecule type" value="Genomic_DNA"/>
</dbReference>
<dbReference type="EMBL" id="AC020898">
    <property type="status" value="NOT_ANNOTATED_CDS"/>
    <property type="molecule type" value="Genomic_DNA"/>
</dbReference>
<dbReference type="EMBL" id="CH471084">
    <property type="protein sequence ID" value="EAW95834.1"/>
    <property type="status" value="ALT_SEQ"/>
    <property type="molecule type" value="Genomic_DNA"/>
</dbReference>
<dbReference type="EMBL" id="BC130624">
    <property type="protein sequence ID" value="AAI30625.1"/>
    <property type="status" value="ALT_INIT"/>
    <property type="molecule type" value="mRNA"/>
</dbReference>
<dbReference type="EMBL" id="AK095189">
    <property type="protein sequence ID" value="BAC04495.1"/>
    <property type="status" value="ALT_INIT"/>
    <property type="molecule type" value="mRNA"/>
</dbReference>
<dbReference type="CCDS" id="CCDS4047.3">
    <molecule id="Q8N9B5-1"/>
</dbReference>
<dbReference type="RefSeq" id="NP_689618.4">
    <molecule id="Q8N9B5-1"/>
    <property type="nucleotide sequence ID" value="NM_152405.5"/>
</dbReference>
<dbReference type="BioGRID" id="126372">
    <property type="interactions" value="43"/>
</dbReference>
<dbReference type="FunCoup" id="Q8N9B5">
    <property type="interactions" value="1795"/>
</dbReference>
<dbReference type="IntAct" id="Q8N9B5">
    <property type="interactions" value="31"/>
</dbReference>
<dbReference type="MINT" id="Q8N9B5"/>
<dbReference type="STRING" id="9606.ENSP00000379441"/>
<dbReference type="GlyGen" id="Q8N9B5">
    <property type="glycosylation" value="2 sites, 1 O-linked glycan (1 site)"/>
</dbReference>
<dbReference type="iPTMnet" id="Q8N9B5"/>
<dbReference type="PhosphoSitePlus" id="Q8N9B5"/>
<dbReference type="BioMuta" id="JMY"/>
<dbReference type="DMDM" id="172045777"/>
<dbReference type="jPOST" id="Q8N9B5"/>
<dbReference type="MassIVE" id="Q8N9B5"/>
<dbReference type="PaxDb" id="9606-ENSP00000379441"/>
<dbReference type="PeptideAtlas" id="Q8N9B5"/>
<dbReference type="ProteomicsDB" id="72518">
    <molecule id="Q8N9B5-1"/>
</dbReference>
<dbReference type="ProteomicsDB" id="72519">
    <molecule id="Q8N9B5-2"/>
</dbReference>
<dbReference type="Pumba" id="Q8N9B5"/>
<dbReference type="Antibodypedia" id="24555">
    <property type="antibodies" value="251 antibodies from 29 providers"/>
</dbReference>
<dbReference type="DNASU" id="133746"/>
<dbReference type="Ensembl" id="ENST00000396137.5">
    <molecule id="Q8N9B5-1"/>
    <property type="protein sequence ID" value="ENSP00000379441.4"/>
    <property type="gene ID" value="ENSG00000152409.9"/>
</dbReference>
<dbReference type="GeneID" id="133746"/>
<dbReference type="KEGG" id="hsa:133746"/>
<dbReference type="MANE-Select" id="ENST00000396137.5">
    <property type="protein sequence ID" value="ENSP00000379441.4"/>
    <property type="RefSeq nucleotide sequence ID" value="NM_152405.5"/>
    <property type="RefSeq protein sequence ID" value="NP_689618.4"/>
</dbReference>
<dbReference type="UCSC" id="uc003kfx.5">
    <molecule id="Q8N9B5-1"/>
    <property type="organism name" value="human"/>
</dbReference>
<dbReference type="AGR" id="HGNC:28916"/>
<dbReference type="CTD" id="133746"/>
<dbReference type="DisGeNET" id="133746"/>
<dbReference type="GeneCards" id="JMY"/>
<dbReference type="HGNC" id="HGNC:28916">
    <property type="gene designation" value="JMY"/>
</dbReference>
<dbReference type="HPA" id="ENSG00000152409">
    <property type="expression patterns" value="Low tissue specificity"/>
</dbReference>
<dbReference type="MIM" id="604279">
    <property type="type" value="gene"/>
</dbReference>
<dbReference type="neXtProt" id="NX_Q8N9B5"/>
<dbReference type="OpenTargets" id="ENSG00000152409"/>
<dbReference type="PharmGKB" id="PA164721124"/>
<dbReference type="VEuPathDB" id="HostDB:ENSG00000152409"/>
<dbReference type="eggNOG" id="ENOG502QRHU">
    <property type="taxonomic scope" value="Eukaryota"/>
</dbReference>
<dbReference type="GeneTree" id="ENSGT00510000046704"/>
<dbReference type="HOGENOM" id="CLU_012316_0_0_1"/>
<dbReference type="InParanoid" id="Q8N9B5"/>
<dbReference type="OMA" id="PGEECSW"/>
<dbReference type="OrthoDB" id="6284683at2759"/>
<dbReference type="PAN-GO" id="Q8N9B5">
    <property type="GO annotations" value="9 GO annotations based on evolutionary models"/>
</dbReference>
<dbReference type="PhylomeDB" id="Q8N9B5"/>
<dbReference type="TreeFam" id="TF331023"/>
<dbReference type="PathwayCommons" id="Q8N9B5"/>
<dbReference type="Reactome" id="R-HSA-6804760">
    <property type="pathway name" value="Regulation of TP53 Activity through Methylation"/>
</dbReference>
<dbReference type="SignaLink" id="Q8N9B5"/>
<dbReference type="SIGNOR" id="Q8N9B5"/>
<dbReference type="BioGRID-ORCS" id="133746">
    <property type="hits" value="13 hits in 1157 CRISPR screens"/>
</dbReference>
<dbReference type="ChiTaRS" id="JMY">
    <property type="organism name" value="human"/>
</dbReference>
<dbReference type="GenomeRNAi" id="133746"/>
<dbReference type="Pharos" id="Q8N9B5">
    <property type="development level" value="Tbio"/>
</dbReference>
<dbReference type="PRO" id="PR:Q8N9B5"/>
<dbReference type="Proteomes" id="UP000005640">
    <property type="component" value="Chromosome 5"/>
</dbReference>
<dbReference type="RNAct" id="Q8N9B5">
    <property type="molecule type" value="protein"/>
</dbReference>
<dbReference type="Bgee" id="ENSG00000152409">
    <property type="expression patterns" value="Expressed in endothelial cell and 193 other cell types or tissues"/>
</dbReference>
<dbReference type="GO" id="GO:0000421">
    <property type="term" value="C:autophagosome membrane"/>
    <property type="evidence" value="ECO:0000314"/>
    <property type="project" value="UniProtKB"/>
</dbReference>
<dbReference type="GO" id="GO:0031252">
    <property type="term" value="C:cell leading edge"/>
    <property type="evidence" value="ECO:0000314"/>
    <property type="project" value="UniProtKB"/>
</dbReference>
<dbReference type="GO" id="GO:0005737">
    <property type="term" value="C:cytoplasm"/>
    <property type="evidence" value="ECO:0000318"/>
    <property type="project" value="GO_Central"/>
</dbReference>
<dbReference type="GO" id="GO:0031410">
    <property type="term" value="C:cytoplasmic vesicle"/>
    <property type="evidence" value="ECO:0000314"/>
    <property type="project" value="UniProtKB"/>
</dbReference>
<dbReference type="GO" id="GO:0005856">
    <property type="term" value="C:cytoskeleton"/>
    <property type="evidence" value="ECO:0007669"/>
    <property type="project" value="UniProtKB-SubCell"/>
</dbReference>
<dbReference type="GO" id="GO:0012505">
    <property type="term" value="C:endomembrane system"/>
    <property type="evidence" value="ECO:0007669"/>
    <property type="project" value="UniProtKB-SubCell"/>
</dbReference>
<dbReference type="GO" id="GO:0005654">
    <property type="term" value="C:nucleoplasm"/>
    <property type="evidence" value="ECO:0000304"/>
    <property type="project" value="Reactome"/>
</dbReference>
<dbReference type="GO" id="GO:0005634">
    <property type="term" value="C:nucleus"/>
    <property type="evidence" value="ECO:0000250"/>
    <property type="project" value="UniProtKB"/>
</dbReference>
<dbReference type="GO" id="GO:0003779">
    <property type="term" value="F:actin binding"/>
    <property type="evidence" value="ECO:0007669"/>
    <property type="project" value="UniProtKB-KW"/>
</dbReference>
<dbReference type="GO" id="GO:0071933">
    <property type="term" value="F:Arp2/3 complex binding"/>
    <property type="evidence" value="ECO:0000318"/>
    <property type="project" value="GO_Central"/>
</dbReference>
<dbReference type="GO" id="GO:0008017">
    <property type="term" value="F:microtubule binding"/>
    <property type="evidence" value="ECO:0000314"/>
    <property type="project" value="UniProtKB"/>
</dbReference>
<dbReference type="GO" id="GO:0003713">
    <property type="term" value="F:transcription coactivator activity"/>
    <property type="evidence" value="ECO:0000250"/>
    <property type="project" value="HGNC-UCL"/>
</dbReference>
<dbReference type="GO" id="GO:0070060">
    <property type="term" value="P:'de novo' actin filament nucleation"/>
    <property type="evidence" value="ECO:0000250"/>
    <property type="project" value="UniProtKB"/>
</dbReference>
<dbReference type="GO" id="GO:0070358">
    <property type="term" value="P:actin polymerization-dependent cell motility"/>
    <property type="evidence" value="ECO:0000250"/>
    <property type="project" value="UniProtKB"/>
</dbReference>
<dbReference type="GO" id="GO:0034314">
    <property type="term" value="P:Arp2/3 complex-mediated actin nucleation"/>
    <property type="evidence" value="ECO:0000250"/>
    <property type="project" value="UniProtKB"/>
</dbReference>
<dbReference type="GO" id="GO:0009267">
    <property type="term" value="P:cellular response to starvation"/>
    <property type="evidence" value="ECO:0000315"/>
    <property type="project" value="UniProtKB"/>
</dbReference>
<dbReference type="GO" id="GO:0006281">
    <property type="term" value="P:DNA repair"/>
    <property type="evidence" value="ECO:0007669"/>
    <property type="project" value="UniProtKB-KW"/>
</dbReference>
<dbReference type="GO" id="GO:0072332">
    <property type="term" value="P:intrinsic apoptotic signaling pathway by p53 class mediator"/>
    <property type="evidence" value="ECO:0000318"/>
    <property type="project" value="GO_Central"/>
</dbReference>
<dbReference type="GO" id="GO:0043065">
    <property type="term" value="P:positive regulation of apoptotic process"/>
    <property type="evidence" value="ECO:0000250"/>
    <property type="project" value="UniProtKB"/>
</dbReference>
<dbReference type="GO" id="GO:0006357">
    <property type="term" value="P:regulation of transcription by RNA polymerase II"/>
    <property type="evidence" value="ECO:0000250"/>
    <property type="project" value="HGNC-UCL"/>
</dbReference>
<dbReference type="InterPro" id="IPR031738">
    <property type="entry name" value="JMY/WHAMM"/>
</dbReference>
<dbReference type="InterPro" id="IPR031808">
    <property type="entry name" value="JMY/WHAMM_N"/>
</dbReference>
<dbReference type="InterPro" id="IPR003124">
    <property type="entry name" value="WH2_dom"/>
</dbReference>
<dbReference type="PANTHER" id="PTHR23330:SF8">
    <property type="entry name" value="JUNCTION-MEDIATING AND -REGULATORY PROTEIN"/>
    <property type="match status" value="1"/>
</dbReference>
<dbReference type="PANTHER" id="PTHR23330">
    <property type="entry name" value="P300 TRANSCRIPTIONAL COFACTOR JMY-RELATED"/>
    <property type="match status" value="1"/>
</dbReference>
<dbReference type="Pfam" id="PF15871">
    <property type="entry name" value="JMY"/>
    <property type="match status" value="1"/>
</dbReference>
<dbReference type="Pfam" id="PF15920">
    <property type="entry name" value="WHAMM-JMY_N"/>
    <property type="match status" value="2"/>
</dbReference>
<dbReference type="SUPFAM" id="SSF101447">
    <property type="entry name" value="Formin homology 2 domain (FH2 domain)"/>
    <property type="match status" value="1"/>
</dbReference>
<dbReference type="PROSITE" id="PS51082">
    <property type="entry name" value="WH2"/>
    <property type="match status" value="1"/>
</dbReference>
<evidence type="ECO:0000250" key="1"/>
<evidence type="ECO:0000250" key="2">
    <source>
        <dbReference type="UniProtKB" id="Q9QXM1"/>
    </source>
</evidence>
<evidence type="ECO:0000255" key="3"/>
<evidence type="ECO:0000255" key="4">
    <source>
        <dbReference type="PROSITE-ProRule" id="PRU00406"/>
    </source>
</evidence>
<evidence type="ECO:0000256" key="5">
    <source>
        <dbReference type="SAM" id="MobiDB-lite"/>
    </source>
</evidence>
<evidence type="ECO:0000269" key="6">
    <source>
    </source>
</evidence>
<evidence type="ECO:0000269" key="7">
    <source>
    </source>
</evidence>
<evidence type="ECO:0000269" key="8">
    <source>
    </source>
</evidence>
<evidence type="ECO:0000269" key="9">
    <source>
    </source>
</evidence>
<evidence type="ECO:0000269" key="10">
    <source ref="2"/>
</evidence>
<evidence type="ECO:0000303" key="11">
    <source>
    </source>
</evidence>
<evidence type="ECO:0000305" key="12"/>
<evidence type="ECO:0007744" key="13">
    <source>
    </source>
</evidence>
<evidence type="ECO:0007744" key="14">
    <source>
    </source>
</evidence>
<protein>
    <recommendedName>
        <fullName>Junction-mediating and -regulatory protein</fullName>
    </recommendedName>
</protein>